<reference key="1">
    <citation type="journal article" date="2002" name="Nature">
        <title>Sequence and analysis of chromosome 2 of Dictyostelium discoideum.</title>
        <authorList>
            <person name="Gloeckner G."/>
            <person name="Eichinger L."/>
            <person name="Szafranski K."/>
            <person name="Pachebat J.A."/>
            <person name="Bankier A.T."/>
            <person name="Dear P.H."/>
            <person name="Lehmann R."/>
            <person name="Baumgart C."/>
            <person name="Parra G."/>
            <person name="Abril J.F."/>
            <person name="Guigo R."/>
            <person name="Kumpf K."/>
            <person name="Tunggal B."/>
            <person name="Cox E.C."/>
            <person name="Quail M.A."/>
            <person name="Platzer M."/>
            <person name="Rosenthal A."/>
            <person name="Noegel A.A."/>
        </authorList>
    </citation>
    <scope>NUCLEOTIDE SEQUENCE [LARGE SCALE GENOMIC DNA]</scope>
    <source>
        <strain>AX4</strain>
    </source>
</reference>
<reference key="2">
    <citation type="journal article" date="2005" name="Nature">
        <title>The genome of the social amoeba Dictyostelium discoideum.</title>
        <authorList>
            <person name="Eichinger L."/>
            <person name="Pachebat J.A."/>
            <person name="Gloeckner G."/>
            <person name="Rajandream M.A."/>
            <person name="Sucgang R."/>
            <person name="Berriman M."/>
            <person name="Song J."/>
            <person name="Olsen R."/>
            <person name="Szafranski K."/>
            <person name="Xu Q."/>
            <person name="Tunggal B."/>
            <person name="Kummerfeld S."/>
            <person name="Madera M."/>
            <person name="Konfortov B.A."/>
            <person name="Rivero F."/>
            <person name="Bankier A.T."/>
            <person name="Lehmann R."/>
            <person name="Hamlin N."/>
            <person name="Davies R."/>
            <person name="Gaudet P."/>
            <person name="Fey P."/>
            <person name="Pilcher K."/>
            <person name="Chen G."/>
            <person name="Saunders D."/>
            <person name="Sodergren E.J."/>
            <person name="Davis P."/>
            <person name="Kerhornou A."/>
            <person name="Nie X."/>
            <person name="Hall N."/>
            <person name="Anjard C."/>
            <person name="Hemphill L."/>
            <person name="Bason N."/>
            <person name="Farbrother P."/>
            <person name="Desany B."/>
            <person name="Just E."/>
            <person name="Morio T."/>
            <person name="Rost R."/>
            <person name="Churcher C.M."/>
            <person name="Cooper J."/>
            <person name="Haydock S."/>
            <person name="van Driessche N."/>
            <person name="Cronin A."/>
            <person name="Goodhead I."/>
            <person name="Muzny D.M."/>
            <person name="Mourier T."/>
            <person name="Pain A."/>
            <person name="Lu M."/>
            <person name="Harper D."/>
            <person name="Lindsay R."/>
            <person name="Hauser H."/>
            <person name="James K.D."/>
            <person name="Quiles M."/>
            <person name="Madan Babu M."/>
            <person name="Saito T."/>
            <person name="Buchrieser C."/>
            <person name="Wardroper A."/>
            <person name="Felder M."/>
            <person name="Thangavelu M."/>
            <person name="Johnson D."/>
            <person name="Knights A."/>
            <person name="Loulseged H."/>
            <person name="Mungall K.L."/>
            <person name="Oliver K."/>
            <person name="Price C."/>
            <person name="Quail M.A."/>
            <person name="Urushihara H."/>
            <person name="Hernandez J."/>
            <person name="Rabbinowitsch E."/>
            <person name="Steffen D."/>
            <person name="Sanders M."/>
            <person name="Ma J."/>
            <person name="Kohara Y."/>
            <person name="Sharp S."/>
            <person name="Simmonds M.N."/>
            <person name="Spiegler S."/>
            <person name="Tivey A."/>
            <person name="Sugano S."/>
            <person name="White B."/>
            <person name="Walker D."/>
            <person name="Woodward J.R."/>
            <person name="Winckler T."/>
            <person name="Tanaka Y."/>
            <person name="Shaulsky G."/>
            <person name="Schleicher M."/>
            <person name="Weinstock G.M."/>
            <person name="Rosenthal A."/>
            <person name="Cox E.C."/>
            <person name="Chisholm R.L."/>
            <person name="Gibbs R.A."/>
            <person name="Loomis W.F."/>
            <person name="Platzer M."/>
            <person name="Kay R.R."/>
            <person name="Williams J.G."/>
            <person name="Dear P.H."/>
            <person name="Noegel A.A."/>
            <person name="Barrell B.G."/>
            <person name="Kuspa A."/>
        </authorList>
    </citation>
    <scope>NUCLEOTIDE SEQUENCE [LARGE SCALE GENOMIC DNA]</scope>
    <source>
        <strain>AX4</strain>
    </source>
</reference>
<reference key="3">
    <citation type="journal article" date="2006" name="Development">
        <title>bZIP transcription factor interactions regulate DIF responses in Dictyostelium.</title>
        <authorList>
            <person name="Huang E."/>
            <person name="Blagg S.L."/>
            <person name="Keller T."/>
            <person name="Katoh M."/>
            <person name="Shaulsky G."/>
            <person name="Thompson C.R.L."/>
        </authorList>
    </citation>
    <scope>IDENTIFICATION</scope>
</reference>
<comment type="function">
    <text evidence="1">Probable transcriptional regulator.</text>
</comment>
<comment type="subcellular location">
    <subcellularLocation>
        <location evidence="2">Nucleus</location>
    </subcellularLocation>
</comment>
<comment type="similarity">
    <text evidence="4">Belongs to the bZIP family.</text>
</comment>
<sequence>MVELESMSSSSEWFLNNNSNIHNNTHNHNHNNNNNNNNINSNNHGHSANSSAHNHNNNNNNNTNNNSNNSNNNNNNNNNNNNTQNTNNGTFLTPLPVLTNSSTGLGKSIDWLYTNTSNTDSHNINSSSNKVTKLSNGFSLLNQDGTQSPSCFLNLSSTGNHEDPVQVPMNNNPQDLLFQFNISPQLQSQNNNSSNNNNNNNNNGSNTPLNGSNGSNNNYSSPISPVPQYQHSAGSSPIQEYPYYSPSSSPHSNESTSPITVIKDSGSIINPINNNNNNNNNNNNNNNNNNNNNNNNNNKNNLNNNTFQFSSLKSTTGIAPPLQTDYHLLYNFVQQNFSGKPEDSLLNQTLNNNNNNNNNNNNNNNNTTIQTSPQPLVLPQIQNPFLPYNISTPISVPNNILSSAQSSTNSSPNNNNNNNNNNNNIFSTVNNNNNLVNNNSNNMELDVDKPFSQEKFYLHLKSIVPSFNENFEASSESAQSESSQESDYDALNERNSGVKKRGRDEDQIDTSGQVVLSREHVLKLSSKEIEEYVSRLKMHHILTQAEEKELKKQRRLVKNREYASQSRSRRKIYVENIETKLQKTNQDCASIKSQLNSVKEENKALKKQLYSLTNTLKSNPSLAEAFGKIFSPIGNNKTSSATLFVFFFLFTFTFLFQSSTVTFNSDRVSSIQRNLLSLEETQATEWNIKRAILEETKQYVDSLLTSLYTSKLQSLSETPLDTSNYIINNNNNESTSETTTNNKVVSTSSDDISNVLSNLSVSDKEVPQKCKDSSDLKCDSPPLSPLN</sequence>
<feature type="chain" id="PRO_0000384409" description="Probable basic-leucine zipper transcription factor J">
    <location>
        <begin position="1"/>
        <end position="787"/>
    </location>
</feature>
<feature type="domain" description="bZIP" evidence="2">
    <location>
        <begin position="549"/>
        <end position="612"/>
    </location>
</feature>
<feature type="region of interest" description="Disordered" evidence="3">
    <location>
        <begin position="18"/>
        <end position="95"/>
    </location>
</feature>
<feature type="region of interest" description="Disordered" evidence="3">
    <location>
        <begin position="153"/>
        <end position="173"/>
    </location>
</feature>
<feature type="region of interest" description="Disordered" evidence="3">
    <location>
        <begin position="186"/>
        <end position="306"/>
    </location>
</feature>
<feature type="region of interest" description="Disordered" evidence="3">
    <location>
        <begin position="343"/>
        <end position="372"/>
    </location>
</feature>
<feature type="region of interest" description="Disordered" evidence="3">
    <location>
        <begin position="401"/>
        <end position="441"/>
    </location>
</feature>
<feature type="region of interest" description="Disordered" evidence="3">
    <location>
        <begin position="473"/>
        <end position="507"/>
    </location>
</feature>
<feature type="region of interest" description="Basic motif" evidence="2">
    <location>
        <begin position="551"/>
        <end position="603"/>
    </location>
</feature>
<feature type="region of interest" description="Leucine-zipper" evidence="2">
    <location>
        <begin position="605"/>
        <end position="612"/>
    </location>
</feature>
<feature type="region of interest" description="Disordered" evidence="3">
    <location>
        <begin position="723"/>
        <end position="747"/>
    </location>
</feature>
<feature type="region of interest" description="Disordered" evidence="3">
    <location>
        <begin position="763"/>
        <end position="787"/>
    </location>
</feature>
<feature type="compositionally biased region" description="Low complexity" evidence="3">
    <location>
        <begin position="18"/>
        <end position="90"/>
    </location>
</feature>
<feature type="compositionally biased region" description="Low complexity" evidence="3">
    <location>
        <begin position="186"/>
        <end position="223"/>
    </location>
</feature>
<feature type="compositionally biased region" description="Low complexity" evidence="3">
    <location>
        <begin position="235"/>
        <end position="258"/>
    </location>
</feature>
<feature type="compositionally biased region" description="Low complexity" evidence="3">
    <location>
        <begin position="273"/>
        <end position="305"/>
    </location>
</feature>
<feature type="compositionally biased region" description="Low complexity" evidence="3">
    <location>
        <begin position="351"/>
        <end position="366"/>
    </location>
</feature>
<feature type="compositionally biased region" description="Low complexity" evidence="3">
    <location>
        <begin position="473"/>
        <end position="483"/>
    </location>
</feature>
<feature type="compositionally biased region" description="Basic and acidic residues" evidence="3">
    <location>
        <begin position="763"/>
        <end position="778"/>
    </location>
</feature>
<accession>Q554P0</accession>
<accession>Q86AS2</accession>
<dbReference type="EMBL" id="AAFI02000012">
    <property type="protein sequence ID" value="EAL70389.1"/>
    <property type="molecule type" value="Genomic_DNA"/>
</dbReference>
<dbReference type="RefSeq" id="XP_644283.1">
    <property type="nucleotide sequence ID" value="XM_639191.1"/>
</dbReference>
<dbReference type="SMR" id="Q554P0"/>
<dbReference type="FunCoup" id="Q554P0">
    <property type="interactions" value="161"/>
</dbReference>
<dbReference type="STRING" id="44689.Q554P0"/>
<dbReference type="PaxDb" id="44689-DDB0220002"/>
<dbReference type="EnsemblProtists" id="EAL70389">
    <property type="protein sequence ID" value="EAL70389"/>
    <property type="gene ID" value="DDB_G0274993"/>
</dbReference>
<dbReference type="GeneID" id="8619711"/>
<dbReference type="KEGG" id="ddi:DDB_G0274993"/>
<dbReference type="dictyBase" id="DDB_G0274993">
    <property type="gene designation" value="bzpJ"/>
</dbReference>
<dbReference type="VEuPathDB" id="AmoebaDB:DDB_G0274993"/>
<dbReference type="eggNOG" id="KOG4343">
    <property type="taxonomic scope" value="Eukaryota"/>
</dbReference>
<dbReference type="HOGENOM" id="CLU_356587_0_0_1"/>
<dbReference type="InParanoid" id="Q554P0"/>
<dbReference type="OMA" id="QATEWNI"/>
<dbReference type="PRO" id="PR:Q554P0"/>
<dbReference type="Proteomes" id="UP000002195">
    <property type="component" value="Chromosome 2"/>
</dbReference>
<dbReference type="GO" id="GO:0005634">
    <property type="term" value="C:nucleus"/>
    <property type="evidence" value="ECO:0007669"/>
    <property type="project" value="UniProtKB-SubCell"/>
</dbReference>
<dbReference type="GO" id="GO:0035497">
    <property type="term" value="F:cAMP response element binding"/>
    <property type="evidence" value="ECO:0000318"/>
    <property type="project" value="GO_Central"/>
</dbReference>
<dbReference type="GO" id="GO:0000981">
    <property type="term" value="F:DNA-binding transcription factor activity, RNA polymerase II-specific"/>
    <property type="evidence" value="ECO:0000318"/>
    <property type="project" value="GO_Central"/>
</dbReference>
<dbReference type="GO" id="GO:0006357">
    <property type="term" value="P:regulation of transcription by RNA polymerase II"/>
    <property type="evidence" value="ECO:0000318"/>
    <property type="project" value="GO_Central"/>
</dbReference>
<dbReference type="Gene3D" id="1.20.5.170">
    <property type="match status" value="1"/>
</dbReference>
<dbReference type="InterPro" id="IPR004827">
    <property type="entry name" value="bZIP"/>
</dbReference>
<dbReference type="InterPro" id="IPR004826">
    <property type="entry name" value="bZIP_Maf"/>
</dbReference>
<dbReference type="InterPro" id="IPR046347">
    <property type="entry name" value="bZIP_sf"/>
</dbReference>
<dbReference type="PANTHER" id="PTHR46004">
    <property type="entry name" value="CYCLIC AMP RESPONSE ELEMENT-BINDING PROTEIN A"/>
    <property type="match status" value="1"/>
</dbReference>
<dbReference type="PANTHER" id="PTHR46004:SF3">
    <property type="entry name" value="CYCLIC AMP RESPONSE ELEMENT-BINDING PROTEIN A"/>
    <property type="match status" value="1"/>
</dbReference>
<dbReference type="Pfam" id="PF03131">
    <property type="entry name" value="bZIP_Maf"/>
    <property type="match status" value="1"/>
</dbReference>
<dbReference type="SMART" id="SM00338">
    <property type="entry name" value="BRLZ"/>
    <property type="match status" value="1"/>
</dbReference>
<dbReference type="SUPFAM" id="SSF57959">
    <property type="entry name" value="Leucine zipper domain"/>
    <property type="match status" value="1"/>
</dbReference>
<dbReference type="PROSITE" id="PS50217">
    <property type="entry name" value="BZIP"/>
    <property type="match status" value="1"/>
</dbReference>
<proteinExistence type="inferred from homology"/>
<keyword id="KW-0238">DNA-binding</keyword>
<keyword id="KW-0539">Nucleus</keyword>
<keyword id="KW-1185">Reference proteome</keyword>
<keyword id="KW-0804">Transcription</keyword>
<keyword id="KW-0805">Transcription regulation</keyword>
<name>BZPJ_DICDI</name>
<gene>
    <name type="primary">bzpJ</name>
    <name type="ORF">DDB_G0274993</name>
</gene>
<evidence type="ECO:0000250" key="1"/>
<evidence type="ECO:0000255" key="2">
    <source>
        <dbReference type="PROSITE-ProRule" id="PRU00978"/>
    </source>
</evidence>
<evidence type="ECO:0000256" key="3">
    <source>
        <dbReference type="SAM" id="MobiDB-lite"/>
    </source>
</evidence>
<evidence type="ECO:0000305" key="4"/>
<protein>
    <recommendedName>
        <fullName>Probable basic-leucine zipper transcription factor J</fullName>
    </recommendedName>
    <alternativeName>
        <fullName>Developmental gene 1037 protein</fullName>
    </alternativeName>
</protein>
<organism>
    <name type="scientific">Dictyostelium discoideum</name>
    <name type="common">Social amoeba</name>
    <dbReference type="NCBI Taxonomy" id="44689"/>
    <lineage>
        <taxon>Eukaryota</taxon>
        <taxon>Amoebozoa</taxon>
        <taxon>Evosea</taxon>
        <taxon>Eumycetozoa</taxon>
        <taxon>Dictyostelia</taxon>
        <taxon>Dictyosteliales</taxon>
        <taxon>Dictyosteliaceae</taxon>
        <taxon>Dictyostelium</taxon>
    </lineage>
</organism>